<dbReference type="EMBL" id="BA000012">
    <property type="protein sequence ID" value="BAB53121.1"/>
    <property type="molecule type" value="Genomic_DNA"/>
</dbReference>
<dbReference type="RefSeq" id="WP_010914431.1">
    <property type="nucleotide sequence ID" value="NC_002678.2"/>
</dbReference>
<dbReference type="SMR" id="Q987S9"/>
<dbReference type="KEGG" id="mlo:mlr6929"/>
<dbReference type="PATRIC" id="fig|266835.9.peg.5512"/>
<dbReference type="eggNOG" id="COG3705">
    <property type="taxonomic scope" value="Bacteria"/>
</dbReference>
<dbReference type="HOGENOM" id="CLU_025113_6_0_5"/>
<dbReference type="UniPathway" id="UPA00031">
    <property type="reaction ID" value="UER00006"/>
</dbReference>
<dbReference type="Proteomes" id="UP000000552">
    <property type="component" value="Chromosome"/>
</dbReference>
<dbReference type="GO" id="GO:0005737">
    <property type="term" value="C:cytoplasm"/>
    <property type="evidence" value="ECO:0007669"/>
    <property type="project" value="UniProtKB-SubCell"/>
</dbReference>
<dbReference type="GO" id="GO:0004821">
    <property type="term" value="F:histidine-tRNA ligase activity"/>
    <property type="evidence" value="ECO:0007669"/>
    <property type="project" value="TreeGrafter"/>
</dbReference>
<dbReference type="GO" id="GO:0006427">
    <property type="term" value="P:histidyl-tRNA aminoacylation"/>
    <property type="evidence" value="ECO:0007669"/>
    <property type="project" value="TreeGrafter"/>
</dbReference>
<dbReference type="GO" id="GO:0000105">
    <property type="term" value="P:L-histidine biosynthetic process"/>
    <property type="evidence" value="ECO:0007669"/>
    <property type="project" value="UniProtKB-UniRule"/>
</dbReference>
<dbReference type="CDD" id="cd00773">
    <property type="entry name" value="HisRS-like_core"/>
    <property type="match status" value="1"/>
</dbReference>
<dbReference type="Gene3D" id="3.30.930.10">
    <property type="entry name" value="Bira Bifunctional Protein, Domain 2"/>
    <property type="match status" value="1"/>
</dbReference>
<dbReference type="HAMAP" id="MF_00125">
    <property type="entry name" value="HisZ"/>
    <property type="match status" value="1"/>
</dbReference>
<dbReference type="InterPro" id="IPR045864">
    <property type="entry name" value="aa-tRNA-synth_II/BPL/LPL"/>
</dbReference>
<dbReference type="InterPro" id="IPR041715">
    <property type="entry name" value="HisRS-like_core"/>
</dbReference>
<dbReference type="InterPro" id="IPR004516">
    <property type="entry name" value="HisRS/HisZ"/>
</dbReference>
<dbReference type="InterPro" id="IPR004517">
    <property type="entry name" value="HisZ"/>
</dbReference>
<dbReference type="NCBIfam" id="NF008951">
    <property type="entry name" value="PRK12295.1-4"/>
    <property type="match status" value="1"/>
</dbReference>
<dbReference type="PANTHER" id="PTHR43707:SF1">
    <property type="entry name" value="HISTIDINE--TRNA LIGASE, MITOCHONDRIAL-RELATED"/>
    <property type="match status" value="1"/>
</dbReference>
<dbReference type="PANTHER" id="PTHR43707">
    <property type="entry name" value="HISTIDYL-TRNA SYNTHETASE"/>
    <property type="match status" value="1"/>
</dbReference>
<dbReference type="Pfam" id="PF13393">
    <property type="entry name" value="tRNA-synt_His"/>
    <property type="match status" value="2"/>
</dbReference>
<dbReference type="PIRSF" id="PIRSF001549">
    <property type="entry name" value="His-tRNA_synth"/>
    <property type="match status" value="1"/>
</dbReference>
<dbReference type="SUPFAM" id="SSF55681">
    <property type="entry name" value="Class II aaRS and biotin synthetases"/>
    <property type="match status" value="1"/>
</dbReference>
<keyword id="KW-0028">Amino-acid biosynthesis</keyword>
<keyword id="KW-0963">Cytoplasm</keyword>
<keyword id="KW-0368">Histidine biosynthesis</keyword>
<feature type="chain" id="PRO_0000171057" description="ATP phosphoribosyltransferase regulatory subunit">
    <location>
        <begin position="1"/>
        <end position="373"/>
    </location>
</feature>
<gene>
    <name type="primary">hisZ</name>
    <name type="ordered locus">mlr6929</name>
</gene>
<proteinExistence type="inferred from homology"/>
<evidence type="ECO:0000250" key="1"/>
<evidence type="ECO:0000305" key="2"/>
<protein>
    <recommendedName>
        <fullName>ATP phosphoribosyltransferase regulatory subunit</fullName>
    </recommendedName>
</protein>
<reference key="1">
    <citation type="journal article" date="2000" name="DNA Res.">
        <title>Complete genome structure of the nitrogen-fixing symbiotic bacterium Mesorhizobium loti.</title>
        <authorList>
            <person name="Kaneko T."/>
            <person name="Nakamura Y."/>
            <person name="Sato S."/>
            <person name="Asamizu E."/>
            <person name="Kato T."/>
            <person name="Sasamoto S."/>
            <person name="Watanabe A."/>
            <person name="Idesawa K."/>
            <person name="Ishikawa A."/>
            <person name="Kawashima K."/>
            <person name="Kimura T."/>
            <person name="Kishida Y."/>
            <person name="Kiyokawa C."/>
            <person name="Kohara M."/>
            <person name="Matsumoto M."/>
            <person name="Matsuno A."/>
            <person name="Mochizuki Y."/>
            <person name="Nakayama S."/>
            <person name="Nakazaki N."/>
            <person name="Shimpo S."/>
            <person name="Sugimoto M."/>
            <person name="Takeuchi C."/>
            <person name="Yamada M."/>
            <person name="Tabata S."/>
        </authorList>
    </citation>
    <scope>NUCLEOTIDE SEQUENCE [LARGE SCALE GENOMIC DNA]</scope>
    <source>
        <strain>LMG 29417 / CECT 9101 / MAFF 303099</strain>
    </source>
</reference>
<accession>Q987S9</accession>
<sequence length="373" mass="39622">MTSRFPAIAANITKLFAARNTHAVEVAILQPADPFLDMAGEDLRRRIFLTESETGQTLCLRPEFTIPVCLDHISSQAGTPRRYSYLGEVFRQRREGGNEFFQAGIEDLGDRDTAQADARSVADAHALLSLVLPGRSLAVTLGDQGIFEAVLAALGLPRGWRMRLARAFGSAPMLQAALADLANPPRNGQLSGEVAALVLDGDLDGLSTHIAGGMEQAGLSASAGRSPTDIARRLIEKAELRSVRLSNEAFAALKNFLAIHVPLDGAARALETFAAGAGLSLGAALEKFAARAKAIEAHGLPAEKIRYDAAFGRPLDYYTGVVFEIAAQGGERPLAGGGRYDRLLTLLGAKTAIPGVGFSVWLDRIEALREAAP</sequence>
<comment type="function">
    <text evidence="1">Required for the first step of histidine biosynthesis. May allow the feedback regulation of ATP phosphoribosyltransferase activity by histidine (By similarity).</text>
</comment>
<comment type="pathway">
    <text>Amino-acid biosynthesis; L-histidine biosynthesis; L-histidine from 5-phospho-alpha-D-ribose 1-diphosphate: step 1/9.</text>
</comment>
<comment type="subunit">
    <text evidence="1">Heteromultimer composed of HisG and HisZ subunits.</text>
</comment>
<comment type="subcellular location">
    <subcellularLocation>
        <location evidence="1">Cytoplasm</location>
    </subcellularLocation>
</comment>
<comment type="miscellaneous">
    <text>This function is generally fulfilled by the C-terminal part of HisG, which is missing in some bacteria such as this one.</text>
</comment>
<comment type="similarity">
    <text evidence="2">Belongs to the class-II aminoacyl-tRNA synthetase family. HisZ subfamily.</text>
</comment>
<organism>
    <name type="scientific">Mesorhizobium japonicum (strain LMG 29417 / CECT 9101 / MAFF 303099)</name>
    <name type="common">Mesorhizobium loti (strain MAFF 303099)</name>
    <dbReference type="NCBI Taxonomy" id="266835"/>
    <lineage>
        <taxon>Bacteria</taxon>
        <taxon>Pseudomonadati</taxon>
        <taxon>Pseudomonadota</taxon>
        <taxon>Alphaproteobacteria</taxon>
        <taxon>Hyphomicrobiales</taxon>
        <taxon>Phyllobacteriaceae</taxon>
        <taxon>Mesorhizobium</taxon>
    </lineage>
</organism>
<name>HISZ_RHILO</name>